<reference key="1">
    <citation type="journal article" date="2005" name="Genome Res.">
        <title>Living with two extremes: conclusions from the genome sequence of Natronomonas pharaonis.</title>
        <authorList>
            <person name="Falb M."/>
            <person name="Pfeiffer F."/>
            <person name="Palm P."/>
            <person name="Rodewald K."/>
            <person name="Hickmann V."/>
            <person name="Tittor J."/>
            <person name="Oesterhelt D."/>
        </authorList>
    </citation>
    <scope>NUCLEOTIDE SEQUENCE [LARGE SCALE GENOMIC DNA]</scope>
    <source>
        <strain>ATCC 35678 / DSM 2160 / CIP 103997 / JCM 8858 / NBRC 14720 / NCIMB 2260 / Gabara</strain>
    </source>
</reference>
<comment type="function">
    <text evidence="1">Essential subunit of the Sec protein translocation channel SecYEG. Clamps together the 2 halves of SecY. May contact the channel plug during translocation.</text>
</comment>
<comment type="subunit">
    <text evidence="1">Component of the Sec protein translocase complex. Heterotrimer consisting of SecY (alpha), SecG (beta) and SecE (gamma) subunits. The heterotrimers can form oligomers, although 1 heterotrimer is thought to be able to translocate proteins. Interacts with the ribosome. May interact with SecDF, and other proteins may be involved.</text>
</comment>
<comment type="subcellular location">
    <subcellularLocation>
        <location evidence="1">Cell membrane</location>
        <topology evidence="1">Single-pass membrane protein</topology>
    </subcellularLocation>
</comment>
<comment type="similarity">
    <text evidence="1">Belongs to the SecE/SEC61-gamma family.</text>
</comment>
<name>SECE_NATPD</name>
<sequence length="57" mass="6119">MKTPTDLTSYIRVLKLASTPTWDEFSKVATIAGLGILLVGFIGFVIFSIMTFVPGGP</sequence>
<protein>
    <recommendedName>
        <fullName evidence="1">Protein translocase subunit SecE</fullName>
    </recommendedName>
    <alternativeName>
        <fullName evidence="1">Protein transport protein Sec61 gamma subunit homolog</fullName>
    </alternativeName>
</protein>
<gene>
    <name evidence="1" type="primary">secE</name>
    <name type="ordered locus">NP_0812A</name>
</gene>
<feature type="chain" id="PRO_0000273139" description="Protein translocase subunit SecE">
    <location>
        <begin position="1"/>
        <end position="57"/>
    </location>
</feature>
<feature type="transmembrane region" description="Helical" evidence="1">
    <location>
        <begin position="33"/>
        <end position="53"/>
    </location>
</feature>
<accession>Q3ITN6</accession>
<evidence type="ECO:0000255" key="1">
    <source>
        <dbReference type="HAMAP-Rule" id="MF_00422"/>
    </source>
</evidence>
<proteinExistence type="inferred from homology"/>
<keyword id="KW-1003">Cell membrane</keyword>
<keyword id="KW-0472">Membrane</keyword>
<keyword id="KW-0653">Protein transport</keyword>
<keyword id="KW-1185">Reference proteome</keyword>
<keyword id="KW-0811">Translocation</keyword>
<keyword id="KW-0812">Transmembrane</keyword>
<keyword id="KW-1133">Transmembrane helix</keyword>
<keyword id="KW-0813">Transport</keyword>
<dbReference type="EMBL" id="CR936257">
    <property type="protein sequence ID" value="CAI48497.1"/>
    <property type="molecule type" value="Genomic_DNA"/>
</dbReference>
<dbReference type="RefSeq" id="WP_011322133.1">
    <property type="nucleotide sequence ID" value="NC_007426.1"/>
</dbReference>
<dbReference type="SMR" id="Q3ITN6"/>
<dbReference type="STRING" id="348780.NP_0812A"/>
<dbReference type="EnsemblBacteria" id="CAI48497">
    <property type="protein sequence ID" value="CAI48497"/>
    <property type="gene ID" value="NP_0812A"/>
</dbReference>
<dbReference type="GeneID" id="3703201"/>
<dbReference type="KEGG" id="nph:NP_0812A"/>
<dbReference type="eggNOG" id="arCOG02204">
    <property type="taxonomic scope" value="Archaea"/>
</dbReference>
<dbReference type="HOGENOM" id="CLU_191921_2_0_2"/>
<dbReference type="OrthoDB" id="52835at2157"/>
<dbReference type="Proteomes" id="UP000002698">
    <property type="component" value="Chromosome"/>
</dbReference>
<dbReference type="GO" id="GO:0005886">
    <property type="term" value="C:plasma membrane"/>
    <property type="evidence" value="ECO:0007669"/>
    <property type="project" value="UniProtKB-SubCell"/>
</dbReference>
<dbReference type="GO" id="GO:0008320">
    <property type="term" value="F:protein transmembrane transporter activity"/>
    <property type="evidence" value="ECO:0007669"/>
    <property type="project" value="UniProtKB-UniRule"/>
</dbReference>
<dbReference type="GO" id="GO:0065002">
    <property type="term" value="P:intracellular protein transmembrane transport"/>
    <property type="evidence" value="ECO:0007669"/>
    <property type="project" value="UniProtKB-UniRule"/>
</dbReference>
<dbReference type="GO" id="GO:0009306">
    <property type="term" value="P:protein secretion"/>
    <property type="evidence" value="ECO:0007669"/>
    <property type="project" value="UniProtKB-UniRule"/>
</dbReference>
<dbReference type="GO" id="GO:0006605">
    <property type="term" value="P:protein targeting"/>
    <property type="evidence" value="ECO:0007669"/>
    <property type="project" value="UniProtKB-UniRule"/>
</dbReference>
<dbReference type="Gene3D" id="1.20.5.820">
    <property type="entry name" value="Preprotein translocase SecE subunit"/>
    <property type="match status" value="1"/>
</dbReference>
<dbReference type="HAMAP" id="MF_00422">
    <property type="entry name" value="SecE"/>
    <property type="match status" value="1"/>
</dbReference>
<dbReference type="InterPro" id="IPR023391">
    <property type="entry name" value="Prot_translocase_SecE_dom_sf"/>
</dbReference>
<dbReference type="InterPro" id="IPR008158">
    <property type="entry name" value="Translocase_Sec61-g"/>
</dbReference>
<dbReference type="InterPro" id="IPR001901">
    <property type="entry name" value="Translocase_SecE/Sec61-g"/>
</dbReference>
<dbReference type="NCBIfam" id="NF006910">
    <property type="entry name" value="PRK09400.1-6"/>
    <property type="match status" value="1"/>
</dbReference>
<dbReference type="NCBIfam" id="TIGR00327">
    <property type="entry name" value="secE_euk_arch"/>
    <property type="match status" value="1"/>
</dbReference>
<dbReference type="SUPFAM" id="SSF103456">
    <property type="entry name" value="Preprotein translocase SecE subunit"/>
    <property type="match status" value="1"/>
</dbReference>
<organism>
    <name type="scientific">Natronomonas pharaonis (strain ATCC 35678 / DSM 2160 / CIP 103997 / JCM 8858 / NBRC 14720 / NCIMB 2260 / Gabara)</name>
    <name type="common">Halobacterium pharaonis</name>
    <dbReference type="NCBI Taxonomy" id="348780"/>
    <lineage>
        <taxon>Archaea</taxon>
        <taxon>Methanobacteriati</taxon>
        <taxon>Methanobacteriota</taxon>
        <taxon>Stenosarchaea group</taxon>
        <taxon>Halobacteria</taxon>
        <taxon>Halobacteriales</taxon>
        <taxon>Haloarculaceae</taxon>
        <taxon>Natronomonas</taxon>
    </lineage>
</organism>